<feature type="signal peptide" evidence="1">
    <location>
        <begin position="1"/>
        <end position="19"/>
    </location>
</feature>
<feature type="chain" id="PRO_0000261406" description="Placenta-specific protein 9">
    <location>
        <begin position="20"/>
        <end position="108"/>
    </location>
</feature>
<feature type="region of interest" description="Disordered" evidence="2">
    <location>
        <begin position="18"/>
        <end position="49"/>
    </location>
</feature>
<feature type="region of interest" description="Disordered" evidence="2">
    <location>
        <begin position="89"/>
        <end position="108"/>
    </location>
</feature>
<feature type="coiled-coil region" evidence="1">
    <location>
        <begin position="54"/>
        <end position="91"/>
    </location>
</feature>
<name>PLAC9_MOUSE</name>
<proteinExistence type="evidence at transcript level"/>
<sequence length="108" mass="11275">MQALLCALAGLALLRAGTGEWGQGPRDTPGRRAAESPSSPGDLAGSPGCDRHAAVQRRLDIMEETVEKTVEHLEAEVTGLLGLLEELASNLPTGPFSPKPDLLGDDGF</sequence>
<keyword id="KW-0175">Coiled coil</keyword>
<keyword id="KW-1185">Reference proteome</keyword>
<keyword id="KW-0964">Secreted</keyword>
<keyword id="KW-0732">Signal</keyword>
<reference key="1">
    <citation type="journal article" date="2005" name="Science">
        <title>The transcriptional landscape of the mammalian genome.</title>
        <authorList>
            <person name="Carninci P."/>
            <person name="Kasukawa T."/>
            <person name="Katayama S."/>
            <person name="Gough J."/>
            <person name="Frith M.C."/>
            <person name="Maeda N."/>
            <person name="Oyama R."/>
            <person name="Ravasi T."/>
            <person name="Lenhard B."/>
            <person name="Wells C."/>
            <person name="Kodzius R."/>
            <person name="Shimokawa K."/>
            <person name="Bajic V.B."/>
            <person name="Brenner S.E."/>
            <person name="Batalov S."/>
            <person name="Forrest A.R."/>
            <person name="Zavolan M."/>
            <person name="Davis M.J."/>
            <person name="Wilming L.G."/>
            <person name="Aidinis V."/>
            <person name="Allen J.E."/>
            <person name="Ambesi-Impiombato A."/>
            <person name="Apweiler R."/>
            <person name="Aturaliya R.N."/>
            <person name="Bailey T.L."/>
            <person name="Bansal M."/>
            <person name="Baxter L."/>
            <person name="Beisel K.W."/>
            <person name="Bersano T."/>
            <person name="Bono H."/>
            <person name="Chalk A.M."/>
            <person name="Chiu K.P."/>
            <person name="Choudhary V."/>
            <person name="Christoffels A."/>
            <person name="Clutterbuck D.R."/>
            <person name="Crowe M.L."/>
            <person name="Dalla E."/>
            <person name="Dalrymple B.P."/>
            <person name="de Bono B."/>
            <person name="Della Gatta G."/>
            <person name="di Bernardo D."/>
            <person name="Down T."/>
            <person name="Engstrom P."/>
            <person name="Fagiolini M."/>
            <person name="Faulkner G."/>
            <person name="Fletcher C.F."/>
            <person name="Fukushima T."/>
            <person name="Furuno M."/>
            <person name="Futaki S."/>
            <person name="Gariboldi M."/>
            <person name="Georgii-Hemming P."/>
            <person name="Gingeras T.R."/>
            <person name="Gojobori T."/>
            <person name="Green R.E."/>
            <person name="Gustincich S."/>
            <person name="Harbers M."/>
            <person name="Hayashi Y."/>
            <person name="Hensch T.K."/>
            <person name="Hirokawa N."/>
            <person name="Hill D."/>
            <person name="Huminiecki L."/>
            <person name="Iacono M."/>
            <person name="Ikeo K."/>
            <person name="Iwama A."/>
            <person name="Ishikawa T."/>
            <person name="Jakt M."/>
            <person name="Kanapin A."/>
            <person name="Katoh M."/>
            <person name="Kawasawa Y."/>
            <person name="Kelso J."/>
            <person name="Kitamura H."/>
            <person name="Kitano H."/>
            <person name="Kollias G."/>
            <person name="Krishnan S.P."/>
            <person name="Kruger A."/>
            <person name="Kummerfeld S.K."/>
            <person name="Kurochkin I.V."/>
            <person name="Lareau L.F."/>
            <person name="Lazarevic D."/>
            <person name="Lipovich L."/>
            <person name="Liu J."/>
            <person name="Liuni S."/>
            <person name="McWilliam S."/>
            <person name="Madan Babu M."/>
            <person name="Madera M."/>
            <person name="Marchionni L."/>
            <person name="Matsuda H."/>
            <person name="Matsuzawa S."/>
            <person name="Miki H."/>
            <person name="Mignone F."/>
            <person name="Miyake S."/>
            <person name="Morris K."/>
            <person name="Mottagui-Tabar S."/>
            <person name="Mulder N."/>
            <person name="Nakano N."/>
            <person name="Nakauchi H."/>
            <person name="Ng P."/>
            <person name="Nilsson R."/>
            <person name="Nishiguchi S."/>
            <person name="Nishikawa S."/>
            <person name="Nori F."/>
            <person name="Ohara O."/>
            <person name="Okazaki Y."/>
            <person name="Orlando V."/>
            <person name="Pang K.C."/>
            <person name="Pavan W.J."/>
            <person name="Pavesi G."/>
            <person name="Pesole G."/>
            <person name="Petrovsky N."/>
            <person name="Piazza S."/>
            <person name="Reed J."/>
            <person name="Reid J.F."/>
            <person name="Ring B.Z."/>
            <person name="Ringwald M."/>
            <person name="Rost B."/>
            <person name="Ruan Y."/>
            <person name="Salzberg S.L."/>
            <person name="Sandelin A."/>
            <person name="Schneider C."/>
            <person name="Schoenbach C."/>
            <person name="Sekiguchi K."/>
            <person name="Semple C.A."/>
            <person name="Seno S."/>
            <person name="Sessa L."/>
            <person name="Sheng Y."/>
            <person name="Shibata Y."/>
            <person name="Shimada H."/>
            <person name="Shimada K."/>
            <person name="Silva D."/>
            <person name="Sinclair B."/>
            <person name="Sperling S."/>
            <person name="Stupka E."/>
            <person name="Sugiura K."/>
            <person name="Sultana R."/>
            <person name="Takenaka Y."/>
            <person name="Taki K."/>
            <person name="Tammoja K."/>
            <person name="Tan S.L."/>
            <person name="Tang S."/>
            <person name="Taylor M.S."/>
            <person name="Tegner J."/>
            <person name="Teichmann S.A."/>
            <person name="Ueda H.R."/>
            <person name="van Nimwegen E."/>
            <person name="Verardo R."/>
            <person name="Wei C.L."/>
            <person name="Yagi K."/>
            <person name="Yamanishi H."/>
            <person name="Zabarovsky E."/>
            <person name="Zhu S."/>
            <person name="Zimmer A."/>
            <person name="Hide W."/>
            <person name="Bult C."/>
            <person name="Grimmond S.M."/>
            <person name="Teasdale R.D."/>
            <person name="Liu E.T."/>
            <person name="Brusic V."/>
            <person name="Quackenbush J."/>
            <person name="Wahlestedt C."/>
            <person name="Mattick J.S."/>
            <person name="Hume D.A."/>
            <person name="Kai C."/>
            <person name="Sasaki D."/>
            <person name="Tomaru Y."/>
            <person name="Fukuda S."/>
            <person name="Kanamori-Katayama M."/>
            <person name="Suzuki M."/>
            <person name="Aoki J."/>
            <person name="Arakawa T."/>
            <person name="Iida J."/>
            <person name="Imamura K."/>
            <person name="Itoh M."/>
            <person name="Kato T."/>
            <person name="Kawaji H."/>
            <person name="Kawagashira N."/>
            <person name="Kawashima T."/>
            <person name="Kojima M."/>
            <person name="Kondo S."/>
            <person name="Konno H."/>
            <person name="Nakano K."/>
            <person name="Ninomiya N."/>
            <person name="Nishio T."/>
            <person name="Okada M."/>
            <person name="Plessy C."/>
            <person name="Shibata K."/>
            <person name="Shiraki T."/>
            <person name="Suzuki S."/>
            <person name="Tagami M."/>
            <person name="Waki K."/>
            <person name="Watahiki A."/>
            <person name="Okamura-Oho Y."/>
            <person name="Suzuki H."/>
            <person name="Kawai J."/>
            <person name="Hayashizaki Y."/>
        </authorList>
    </citation>
    <scope>NUCLEOTIDE SEQUENCE [LARGE SCALE MRNA]</scope>
    <source>
        <strain>C57BL/6J</strain>
        <tissue>Embryo</tissue>
        <tissue>Head</tissue>
        <tissue>Tongue</tissue>
        <tissue>Xiphoid cartilage</tissue>
    </source>
</reference>
<reference key="2">
    <citation type="journal article" date="2004" name="Genome Res.">
        <title>The status, quality, and expansion of the NIH full-length cDNA project: the Mammalian Gene Collection (MGC).</title>
        <authorList>
            <consortium name="The MGC Project Team"/>
        </authorList>
    </citation>
    <scope>NUCLEOTIDE SEQUENCE [LARGE SCALE MRNA]</scope>
    <source>
        <strain>C57BL/6J</strain>
        <tissue>Mammary gland</tissue>
    </source>
</reference>
<reference key="3">
    <citation type="journal article" date="2003" name="Gene">
        <title>Plac8 and Plac9, novel placental-enriched genes identified through microarray analysis.</title>
        <authorList>
            <person name="Galaviz-Hernandez C."/>
            <person name="Stagg C."/>
            <person name="de Ridder G."/>
            <person name="Tanaka T.S."/>
            <person name="Ko M.S."/>
            <person name="Schlessinger D."/>
            <person name="Nagaraja R."/>
        </authorList>
    </citation>
    <scope>IDENTIFICATION</scope>
    <scope>TISSUE SPECIFICITY</scope>
</reference>
<evidence type="ECO:0000255" key="1"/>
<evidence type="ECO:0000256" key="2">
    <source>
        <dbReference type="SAM" id="MobiDB-lite"/>
    </source>
</evidence>
<evidence type="ECO:0000269" key="3">
    <source>
    </source>
</evidence>
<evidence type="ECO:0000305" key="4"/>
<organism>
    <name type="scientific">Mus musculus</name>
    <name type="common">Mouse</name>
    <dbReference type="NCBI Taxonomy" id="10090"/>
    <lineage>
        <taxon>Eukaryota</taxon>
        <taxon>Metazoa</taxon>
        <taxon>Chordata</taxon>
        <taxon>Craniata</taxon>
        <taxon>Vertebrata</taxon>
        <taxon>Euteleostomi</taxon>
        <taxon>Mammalia</taxon>
        <taxon>Eutheria</taxon>
        <taxon>Euarchontoglires</taxon>
        <taxon>Glires</taxon>
        <taxon>Rodentia</taxon>
        <taxon>Myomorpha</taxon>
        <taxon>Muroidea</taxon>
        <taxon>Muridae</taxon>
        <taxon>Murinae</taxon>
        <taxon>Mus</taxon>
        <taxon>Mus</taxon>
    </lineage>
</organism>
<accession>Q8K262</accession>
<accession>Q3V2D9</accession>
<dbReference type="EMBL" id="AK028003">
    <property type="protein sequence ID" value="BAE20434.1"/>
    <property type="molecule type" value="mRNA"/>
</dbReference>
<dbReference type="EMBL" id="AK047878">
    <property type="protein sequence ID" value="BAE20662.1"/>
    <property type="molecule type" value="mRNA"/>
</dbReference>
<dbReference type="EMBL" id="AK131614">
    <property type="protein sequence ID" value="BAE20721.1"/>
    <property type="molecule type" value="mRNA"/>
</dbReference>
<dbReference type="EMBL" id="AK131901">
    <property type="protein sequence ID" value="BAE20859.1"/>
    <property type="molecule type" value="mRNA"/>
</dbReference>
<dbReference type="EMBL" id="AK133546">
    <property type="protein sequence ID" value="BAE21717.1"/>
    <property type="molecule type" value="mRNA"/>
</dbReference>
<dbReference type="EMBL" id="AK160781">
    <property type="protein sequence ID" value="BAE36005.1"/>
    <property type="molecule type" value="mRNA"/>
</dbReference>
<dbReference type="EMBL" id="BC032982">
    <property type="protein sequence ID" value="AAH32982.1"/>
    <property type="molecule type" value="mRNA"/>
</dbReference>
<dbReference type="CCDS" id="CCDS36832.1"/>
<dbReference type="RefSeq" id="NP_001257432.1">
    <property type="nucleotide sequence ID" value="NM_001270503.1"/>
</dbReference>
<dbReference type="RefSeq" id="NP_997112.1">
    <property type="nucleotide sequence ID" value="NM_207229.3"/>
</dbReference>
<dbReference type="RefSeq" id="XP_001472444.1">
    <property type="nucleotide sequence ID" value="XM_001472394.7"/>
</dbReference>
<dbReference type="SMR" id="Q8K262"/>
<dbReference type="FunCoup" id="Q8K262">
    <property type="interactions" value="5"/>
</dbReference>
<dbReference type="STRING" id="10090.ENSMUSP00000056665"/>
<dbReference type="PhosphoSitePlus" id="Q8K262"/>
<dbReference type="PaxDb" id="10090-ENSMUSP00000056665"/>
<dbReference type="Antibodypedia" id="29944">
    <property type="antibodies" value="82 antibodies from 19 providers"/>
</dbReference>
<dbReference type="Ensembl" id="ENSMUST00000052286.16">
    <property type="protein sequence ID" value="ENSMUSP00000056665.8"/>
    <property type="gene ID" value="ENSMUSG00000095304.10"/>
</dbReference>
<dbReference type="GeneID" id="211623"/>
<dbReference type="KEGG" id="mmu:211623"/>
<dbReference type="UCSC" id="uc007srw.2">
    <property type="organism name" value="mouse"/>
</dbReference>
<dbReference type="AGR" id="MGI:2663998"/>
<dbReference type="CTD" id="219348"/>
<dbReference type="MGI" id="MGI:2663998">
    <property type="gene designation" value="Plac9"/>
</dbReference>
<dbReference type="VEuPathDB" id="HostDB:ENSMUSG00000072674"/>
<dbReference type="VEuPathDB" id="HostDB:ENSMUSG00000094800"/>
<dbReference type="VEuPathDB" id="HostDB:ENSMUSG00000095304"/>
<dbReference type="eggNOG" id="ENOG502SEJ6">
    <property type="taxonomic scope" value="Eukaryota"/>
</dbReference>
<dbReference type="GeneTree" id="ENSGT00390000017848"/>
<dbReference type="HOGENOM" id="CLU_171497_0_0_1"/>
<dbReference type="InParanoid" id="Q8K262"/>
<dbReference type="OMA" id="CDTHVAV"/>
<dbReference type="OrthoDB" id="9937406at2759"/>
<dbReference type="PhylomeDB" id="Q8K262"/>
<dbReference type="TreeFam" id="TF338208"/>
<dbReference type="BioGRID-ORCS" id="100039175">
    <property type="hits" value="0 hits in 1 CRISPR screen"/>
</dbReference>
<dbReference type="BioGRID-ORCS" id="100039246">
    <property type="hits" value="3 hits in 36 CRISPR screens"/>
</dbReference>
<dbReference type="BioGRID-ORCS" id="211623">
    <property type="hits" value="1 hit in 34 CRISPR screens"/>
</dbReference>
<dbReference type="ChiTaRS" id="Gm9780">
    <property type="organism name" value="mouse"/>
</dbReference>
<dbReference type="PRO" id="PR:Q8K262"/>
<dbReference type="Proteomes" id="UP000000589">
    <property type="component" value="Chromosome 14"/>
</dbReference>
<dbReference type="RNAct" id="Q8K262">
    <property type="molecule type" value="protein"/>
</dbReference>
<dbReference type="Bgee" id="ENSMUSG00000095304">
    <property type="expression patterns" value="Expressed in esophagus and 62 other cell types or tissues"/>
</dbReference>
<dbReference type="ExpressionAtlas" id="Q8K262">
    <property type="expression patterns" value="baseline and differential"/>
</dbReference>
<dbReference type="GO" id="GO:0005576">
    <property type="term" value="C:extracellular region"/>
    <property type="evidence" value="ECO:0007669"/>
    <property type="project" value="UniProtKB-SubCell"/>
</dbReference>
<dbReference type="InterPro" id="IPR027941">
    <property type="entry name" value="PLAC9"/>
</dbReference>
<dbReference type="PANTHER" id="PTHR37355">
    <property type="entry name" value="PLACENTA-SPECIFIC PROTEIN 9"/>
    <property type="match status" value="1"/>
</dbReference>
<dbReference type="PANTHER" id="PTHR37355:SF1">
    <property type="entry name" value="PLACENTA-SPECIFIC PROTEIN 9"/>
    <property type="match status" value="1"/>
</dbReference>
<dbReference type="Pfam" id="PF15205">
    <property type="entry name" value="PLAC9"/>
    <property type="match status" value="1"/>
</dbReference>
<protein>
    <recommendedName>
        <fullName>Placenta-specific protein 9</fullName>
    </recommendedName>
</protein>
<gene>
    <name type="primary">Plac9</name>
</gene>
<comment type="subcellular location">
    <subcellularLocation>
        <location evidence="4">Secreted</location>
    </subcellularLocation>
</comment>
<comment type="tissue specificity">
    <text evidence="3">Highly expressed in placenta, and weakly in ovary, testis, and lung.</text>
</comment>
<comment type="similarity">
    <text evidence="4">Belongs to the PLAC9 family.</text>
</comment>